<feature type="chain" id="PRO_0000326395" description="Decreased expression in renal and prostate cancer protein">
    <location>
        <begin position="1"/>
        <end position="540"/>
    </location>
</feature>
<feature type="region of interest" description="Disordered" evidence="3">
    <location>
        <begin position="1"/>
        <end position="264"/>
    </location>
</feature>
<feature type="region of interest" description="Disordered" evidence="3">
    <location>
        <begin position="304"/>
        <end position="389"/>
    </location>
</feature>
<feature type="region of interest" description="Disordered" evidence="3">
    <location>
        <begin position="516"/>
        <end position="540"/>
    </location>
</feature>
<feature type="compositionally biased region" description="Basic and acidic residues" evidence="3">
    <location>
        <begin position="1"/>
        <end position="12"/>
    </location>
</feature>
<feature type="compositionally biased region" description="Low complexity" evidence="3">
    <location>
        <begin position="113"/>
        <end position="125"/>
    </location>
</feature>
<feature type="compositionally biased region" description="Low complexity" evidence="3">
    <location>
        <begin position="180"/>
        <end position="192"/>
    </location>
</feature>
<feature type="compositionally biased region" description="Polar residues" evidence="3">
    <location>
        <begin position="304"/>
        <end position="316"/>
    </location>
</feature>
<feature type="compositionally biased region" description="Low complexity" evidence="3">
    <location>
        <begin position="321"/>
        <end position="330"/>
    </location>
</feature>
<feature type="modified residue" description="Phosphoserine" evidence="1">
    <location>
        <position position="313"/>
    </location>
</feature>
<feature type="modified residue" description="Asymmetric dimethylarginine" evidence="2">
    <location>
        <position position="375"/>
    </location>
</feature>
<feature type="modified residue" description="Omega-N-methylarginine" evidence="2">
    <location>
        <position position="403"/>
    </location>
</feature>
<feature type="modified residue" description="Phosphoserine" evidence="1">
    <location>
        <position position="439"/>
    </location>
</feature>
<dbReference type="EMBL" id="BC149171">
    <property type="protein sequence ID" value="AAI49172.1"/>
    <property type="molecule type" value="mRNA"/>
</dbReference>
<dbReference type="RefSeq" id="NP_001108441.1">
    <property type="nucleotide sequence ID" value="NM_001114969.2"/>
</dbReference>
<dbReference type="FunCoup" id="P0CG10">
    <property type="interactions" value="274"/>
</dbReference>
<dbReference type="STRING" id="9913.ENSBTAP00000057448"/>
<dbReference type="GeneID" id="618186"/>
<dbReference type="KEGG" id="bta:618186"/>
<dbReference type="CTD" id="54921"/>
<dbReference type="InParanoid" id="P0CG10"/>
<dbReference type="OrthoDB" id="9833216at2759"/>
<dbReference type="Proteomes" id="UP000009136">
    <property type="component" value="Unplaced"/>
</dbReference>
<dbReference type="GO" id="GO:0005634">
    <property type="term" value="C:nucleus"/>
    <property type="evidence" value="ECO:0007669"/>
    <property type="project" value="UniProtKB-SubCell"/>
</dbReference>
<dbReference type="PANTHER" id="PTHR28605">
    <property type="entry name" value="CTF8, CHROMOSOME TRANSMISSION FIDELITY FACTOR 8 HOMOLOG (S. CEREVISIAE)"/>
    <property type="match status" value="1"/>
</dbReference>
<dbReference type="PANTHER" id="PTHR28605:SF2">
    <property type="entry name" value="DECREASED EXPRESSION IN RENAL AND PROSTATE CANCER PROTEIN"/>
    <property type="match status" value="1"/>
</dbReference>
<gene>
    <name evidence="1" type="primary">DERPC</name>
</gene>
<name>DERPC_BOVIN</name>
<evidence type="ECO:0000250" key="1">
    <source>
        <dbReference type="UniProtKB" id="P0CG12"/>
    </source>
</evidence>
<evidence type="ECO:0000250" key="2">
    <source>
        <dbReference type="UniProtKB" id="P0CG14"/>
    </source>
</evidence>
<evidence type="ECO:0000256" key="3">
    <source>
        <dbReference type="SAM" id="MobiDB-lite"/>
    </source>
</evidence>
<evidence type="ECO:0000305" key="4"/>
<reference key="1">
    <citation type="submission" date="2007-07" db="EMBL/GenBank/DDBJ databases">
        <authorList>
            <consortium name="NIH - Mammalian Gene Collection (MGC) project"/>
        </authorList>
    </citation>
    <scope>NUCLEOTIDE SEQUENCE [LARGE SCALE MRNA]</scope>
    <source>
        <strain>Hereford</strain>
        <tissue>Fetal muscle</tissue>
    </source>
</reference>
<protein>
    <recommendedName>
        <fullName evidence="1">Decreased expression in renal and prostate cancer protein</fullName>
    </recommendedName>
</protein>
<organism>
    <name type="scientific">Bos taurus</name>
    <name type="common">Bovine</name>
    <dbReference type="NCBI Taxonomy" id="9913"/>
    <lineage>
        <taxon>Eukaryota</taxon>
        <taxon>Metazoa</taxon>
        <taxon>Chordata</taxon>
        <taxon>Craniata</taxon>
        <taxon>Vertebrata</taxon>
        <taxon>Euteleostomi</taxon>
        <taxon>Mammalia</taxon>
        <taxon>Eutheria</taxon>
        <taxon>Laurasiatheria</taxon>
        <taxon>Artiodactyla</taxon>
        <taxon>Ruminantia</taxon>
        <taxon>Pecora</taxon>
        <taxon>Bovidae</taxon>
        <taxon>Bovinae</taxon>
        <taxon>Bos</taxon>
    </lineage>
</organism>
<accession>P0CG10</accession>
<accession>A8E4M1</accession>
<accession>P0C6S9</accession>
<comment type="function">
    <text evidence="1">Potential tumor suppressor.</text>
</comment>
<comment type="subcellular location">
    <subcellularLocation>
        <location evidence="1">Nucleus</location>
    </subcellularLocation>
</comment>
<comment type="similarity">
    <text evidence="4">Belongs to the DERPC family.</text>
</comment>
<sequence length="540" mass="52974">MKEPRIFPRERPTPWTRAPLPPRGRLDGSLGPQGGPVLNTGHPLGMNSDPFLMASSSLGGNLAPFPRNPSPFPTSSGSLASNPAPFPAGARDPGLASFPRGMNPTSTGAVSFPRPGGLLGPSPGSTLNPRAGALPGPGPLSNPRLGSLPGPGPVSNPRPSGLLGTGPDPRSGGPMGPGSGPSLRAGVLLTPGNGPPNPRPVGLGPGPSPNLRSGFVGTNPAPRSSMFPGPGLGPNPRSSGLGPGLGPNPRAGGLGPGPNLDARAGGLLGTGSGLNLRMAGPQGLDLAPILRAAGLLGANSASFSQASGNMGTSPSSMARLPGPIGPNSGPGSRGIGLPGPNPSPLSRAPGPVGPNSAHFARPAGPMGVNANPFPRGTGSGGLNPAAFSQSSNTLASNPINFQRSAGLQGSSPAVFPRASGPLGPNPANFPRATGLQGPSPATFPRSIGPLGPGQVTFPRPAPRPLGSSPAGPVGINPAPFARPTGTLGVNPASFPRMNGPVSKTLVPFPRVGSLPGTNPAAFPRPGGPMAAMYPNGMLPP</sequence>
<proteinExistence type="evidence at transcript level"/>
<keyword id="KW-0488">Methylation</keyword>
<keyword id="KW-0539">Nucleus</keyword>
<keyword id="KW-0597">Phosphoprotein</keyword>
<keyword id="KW-1185">Reference proteome</keyword>